<dbReference type="EMBL" id="AE017220">
    <property type="protein sequence ID" value="AAX67312.1"/>
    <property type="molecule type" value="Genomic_DNA"/>
</dbReference>
<dbReference type="RefSeq" id="WP_000185211.1">
    <property type="nucleotide sequence ID" value="NC_006905.1"/>
</dbReference>
<dbReference type="SMR" id="Q57J00"/>
<dbReference type="KEGG" id="sec:SCH_3406"/>
<dbReference type="HOGENOM" id="CLU_056916_0_0_6"/>
<dbReference type="Proteomes" id="UP000000538">
    <property type="component" value="Chromosome"/>
</dbReference>
<dbReference type="GO" id="GO:0005886">
    <property type="term" value="C:plasma membrane"/>
    <property type="evidence" value="ECO:0007669"/>
    <property type="project" value="UniProtKB-SubCell"/>
</dbReference>
<dbReference type="GO" id="GO:0022857">
    <property type="term" value="F:transmembrane transporter activity"/>
    <property type="evidence" value="ECO:0007669"/>
    <property type="project" value="InterPro"/>
</dbReference>
<dbReference type="FunFam" id="1.20.1250.20:FF:000032">
    <property type="entry name" value="Protein TsgA"/>
    <property type="match status" value="1"/>
</dbReference>
<dbReference type="FunFam" id="1.20.1250.20:FF:000052">
    <property type="entry name" value="Protein TsgA"/>
    <property type="match status" value="1"/>
</dbReference>
<dbReference type="Gene3D" id="1.20.1250.20">
    <property type="entry name" value="MFS general substrate transporter like domains"/>
    <property type="match status" value="2"/>
</dbReference>
<dbReference type="HAMAP" id="MF_01044">
    <property type="entry name" value="MFS_TsgA"/>
    <property type="match status" value="1"/>
</dbReference>
<dbReference type="InterPro" id="IPR011701">
    <property type="entry name" value="MFS"/>
</dbReference>
<dbReference type="InterPro" id="IPR020846">
    <property type="entry name" value="MFS_dom"/>
</dbReference>
<dbReference type="InterPro" id="IPR036259">
    <property type="entry name" value="MFS_trans_sf"/>
</dbReference>
<dbReference type="InterPro" id="IPR023528">
    <property type="entry name" value="MFS_TsgA"/>
</dbReference>
<dbReference type="InterPro" id="IPR050375">
    <property type="entry name" value="MFS_TsgA-like"/>
</dbReference>
<dbReference type="NCBIfam" id="NF002982">
    <property type="entry name" value="PRK03699.1"/>
    <property type="match status" value="1"/>
</dbReference>
<dbReference type="PANTHER" id="PTHR43702">
    <property type="entry name" value="L-FUCOSE-PROTON SYMPORTER"/>
    <property type="match status" value="1"/>
</dbReference>
<dbReference type="PANTHER" id="PTHR43702:SF3">
    <property type="entry name" value="PROTEIN TSGA"/>
    <property type="match status" value="1"/>
</dbReference>
<dbReference type="Pfam" id="PF07690">
    <property type="entry name" value="MFS_1"/>
    <property type="match status" value="1"/>
</dbReference>
<dbReference type="SUPFAM" id="SSF103473">
    <property type="entry name" value="MFS general substrate transporter"/>
    <property type="match status" value="1"/>
</dbReference>
<dbReference type="PROSITE" id="PS50850">
    <property type="entry name" value="MFS"/>
    <property type="match status" value="1"/>
</dbReference>
<evidence type="ECO:0000255" key="1"/>
<evidence type="ECO:0000255" key="2">
    <source>
        <dbReference type="HAMAP-Rule" id="MF_01044"/>
    </source>
</evidence>
<feature type="chain" id="PRO_0000206497" description="Protein TsgA">
    <location>
        <begin position="1"/>
        <end position="393"/>
    </location>
</feature>
<feature type="topological domain" description="Cytoplasmic" evidence="1">
    <location>
        <begin position="1"/>
        <end position="10"/>
    </location>
</feature>
<feature type="transmembrane region" description="Helical" evidence="2">
    <location>
        <begin position="11"/>
        <end position="31"/>
    </location>
</feature>
<feature type="topological domain" description="Periplasmic" evidence="1">
    <location>
        <begin position="32"/>
        <end position="50"/>
    </location>
</feature>
<feature type="transmembrane region" description="Helical" evidence="2">
    <location>
        <begin position="51"/>
        <end position="71"/>
    </location>
</feature>
<feature type="topological domain" description="Cytoplasmic" evidence="1">
    <location>
        <begin position="72"/>
        <end position="77"/>
    </location>
</feature>
<feature type="transmembrane region" description="Helical" evidence="2">
    <location>
        <begin position="78"/>
        <end position="98"/>
    </location>
</feature>
<feature type="topological domain" description="Periplasmic" evidence="1">
    <location>
        <begin position="99"/>
        <end position="100"/>
    </location>
</feature>
<feature type="transmembrane region" description="Helical" evidence="2">
    <location>
        <begin position="101"/>
        <end position="121"/>
    </location>
</feature>
<feature type="topological domain" description="Cytoplasmic" evidence="1">
    <location>
        <begin position="122"/>
        <end position="133"/>
    </location>
</feature>
<feature type="transmembrane region" description="Helical" evidence="2">
    <location>
        <begin position="134"/>
        <end position="154"/>
    </location>
</feature>
<feature type="topological domain" description="Periplasmic" evidence="1">
    <location>
        <begin position="155"/>
        <end position="161"/>
    </location>
</feature>
<feature type="transmembrane region" description="Helical" evidence="2">
    <location>
        <begin position="162"/>
        <end position="182"/>
    </location>
</feature>
<feature type="topological domain" description="Cytoplasmic" evidence="1">
    <location>
        <begin position="183"/>
        <end position="205"/>
    </location>
</feature>
<feature type="transmembrane region" description="Helical" evidence="2">
    <location>
        <begin position="206"/>
        <end position="226"/>
    </location>
</feature>
<feature type="topological domain" description="Periplasmic" evidence="1">
    <location>
        <begin position="227"/>
        <end position="244"/>
    </location>
</feature>
<feature type="transmembrane region" description="Helical" evidence="2">
    <location>
        <begin position="245"/>
        <end position="265"/>
    </location>
</feature>
<feature type="topological domain" description="Cytoplasmic" evidence="1">
    <location>
        <begin position="266"/>
        <end position="272"/>
    </location>
</feature>
<feature type="transmembrane region" description="Helical" evidence="2">
    <location>
        <begin position="273"/>
        <end position="293"/>
    </location>
</feature>
<feature type="topological domain" description="Periplasmic" evidence="1">
    <location>
        <begin position="294"/>
        <end position="297"/>
    </location>
</feature>
<feature type="transmembrane region" description="Helical" evidence="2">
    <location>
        <begin position="298"/>
        <end position="318"/>
    </location>
</feature>
<feature type="topological domain" description="Cytoplasmic" evidence="1">
    <location>
        <begin position="319"/>
        <end position="331"/>
    </location>
</feature>
<feature type="transmembrane region" description="Helical" evidence="2">
    <location>
        <begin position="332"/>
        <end position="352"/>
    </location>
</feature>
<feature type="topological domain" description="Periplasmic" evidence="1">
    <location>
        <begin position="353"/>
        <end position="360"/>
    </location>
</feature>
<feature type="transmembrane region" description="Helical" evidence="2">
    <location>
        <begin position="361"/>
        <end position="381"/>
    </location>
</feature>
<feature type="topological domain" description="Cytoplasmic" evidence="1">
    <location>
        <begin position="382"/>
        <end position="393"/>
    </location>
</feature>
<gene>
    <name evidence="2" type="primary">tsgA</name>
    <name type="ordered locus">SCH_3406</name>
</gene>
<keyword id="KW-0997">Cell inner membrane</keyword>
<keyword id="KW-1003">Cell membrane</keyword>
<keyword id="KW-0472">Membrane</keyword>
<keyword id="KW-0812">Transmembrane</keyword>
<keyword id="KW-1133">Transmembrane helix</keyword>
<sequence>MTNSNRIKLTWISFLSYALTGALVIVTGMVMGNIADYFHLPVSSMSNTFTFLNAGILISIFLNAWLMEIIPLKTQLRFGFILMVLAVAGLMFGHSLALFSAAMFVLGLVSGITMSIGTFLITQLYEGRQRGSRLLFTDSFFSMAGMIFPMVAAFLLARSIEWYWVYACIGLVYLAIFILTFGCEFPALGKHAQHSQAPVVKEKWGIGVLFLAVAALCYILGQLGFISWVPEYAKGLGMSLNDAGALVSDFWMSYMFGMWAFSFILRFFDLQRILTVLAGMAAVLMYLFITGTQAHMPWFILTLGFFSSAIYTSIITLGSQQTKVASPKLVNFILTCGTIGTMLTFVVTGPIVAHSGPQAALLTANGLYAVVFVMCFALGFVSRHRQHSAPATH</sequence>
<protein>
    <recommendedName>
        <fullName evidence="2">Protein TsgA</fullName>
    </recommendedName>
</protein>
<accession>Q57J00</accession>
<name>TSGA_SALCH</name>
<comment type="subcellular location">
    <subcellularLocation>
        <location evidence="2">Cell inner membrane</location>
        <topology evidence="2">Multi-pass membrane protein</topology>
    </subcellularLocation>
</comment>
<comment type="similarity">
    <text evidence="2">Belongs to the major facilitator superfamily. TsgA family.</text>
</comment>
<proteinExistence type="inferred from homology"/>
<organism>
    <name type="scientific">Salmonella choleraesuis (strain SC-B67)</name>
    <dbReference type="NCBI Taxonomy" id="321314"/>
    <lineage>
        <taxon>Bacteria</taxon>
        <taxon>Pseudomonadati</taxon>
        <taxon>Pseudomonadota</taxon>
        <taxon>Gammaproteobacteria</taxon>
        <taxon>Enterobacterales</taxon>
        <taxon>Enterobacteriaceae</taxon>
        <taxon>Salmonella</taxon>
    </lineage>
</organism>
<reference key="1">
    <citation type="journal article" date="2005" name="Nucleic Acids Res.">
        <title>The genome sequence of Salmonella enterica serovar Choleraesuis, a highly invasive and resistant zoonotic pathogen.</title>
        <authorList>
            <person name="Chiu C.-H."/>
            <person name="Tang P."/>
            <person name="Chu C."/>
            <person name="Hu S."/>
            <person name="Bao Q."/>
            <person name="Yu J."/>
            <person name="Chou Y.-Y."/>
            <person name="Wang H.-S."/>
            <person name="Lee Y.-S."/>
        </authorList>
    </citation>
    <scope>NUCLEOTIDE SEQUENCE [LARGE SCALE GENOMIC DNA]</scope>
    <source>
        <strain>SC-B67</strain>
    </source>
</reference>